<name>S46A3_CHICK</name>
<feature type="signal peptide" evidence="3">
    <location>
        <begin position="1"/>
        <end position="26"/>
    </location>
</feature>
<feature type="chain" id="PRO_0000307257" description="Lysosomal proton-coupled steroid conjugate and bile acid symporter SLC46A3">
    <location>
        <begin position="27"/>
        <end position="464"/>
    </location>
</feature>
<feature type="topological domain" description="Extracellular" evidence="3">
    <location>
        <begin position="27"/>
        <end position="71"/>
    </location>
</feature>
<feature type="transmembrane region" description="Helical" evidence="3">
    <location>
        <begin position="72"/>
        <end position="92"/>
    </location>
</feature>
<feature type="topological domain" description="Cytoplasmic" evidence="3">
    <location>
        <begin position="93"/>
        <end position="104"/>
    </location>
</feature>
<feature type="transmembrane region" description="Helical" evidence="3">
    <location>
        <begin position="105"/>
        <end position="125"/>
    </location>
</feature>
<feature type="topological domain" description="Extracellular" evidence="3">
    <location>
        <begin position="126"/>
        <end position="130"/>
    </location>
</feature>
<feature type="transmembrane region" description="Helical" evidence="3">
    <location>
        <begin position="131"/>
        <end position="151"/>
    </location>
</feature>
<feature type="topological domain" description="Cytoplasmic" evidence="3">
    <location>
        <begin position="152"/>
        <end position="171"/>
    </location>
</feature>
<feature type="transmembrane region" description="Helical" evidence="3">
    <location>
        <begin position="172"/>
        <end position="192"/>
    </location>
</feature>
<feature type="topological domain" description="Extracellular" evidence="3">
    <location>
        <begin position="193"/>
        <end position="198"/>
    </location>
</feature>
<feature type="transmembrane region" description="Helical" evidence="3">
    <location>
        <begin position="199"/>
        <end position="219"/>
    </location>
</feature>
<feature type="topological domain" description="Cytoplasmic" evidence="3">
    <location>
        <begin position="220"/>
        <end position="259"/>
    </location>
</feature>
<feature type="transmembrane region" description="Helical" evidence="3">
    <location>
        <begin position="260"/>
        <end position="280"/>
    </location>
</feature>
<feature type="topological domain" description="Extracellular" evidence="3">
    <location>
        <begin position="281"/>
        <end position="296"/>
    </location>
</feature>
<feature type="transmembrane region" description="Helical" evidence="3">
    <location>
        <begin position="297"/>
        <end position="317"/>
    </location>
</feature>
<feature type="topological domain" description="Cytoplasmic" evidence="3">
    <location>
        <begin position="318"/>
        <end position="326"/>
    </location>
</feature>
<feature type="transmembrane region" description="Helical" evidence="3">
    <location>
        <begin position="327"/>
        <end position="347"/>
    </location>
</feature>
<feature type="topological domain" description="Extracellular" evidence="3">
    <location>
        <begin position="348"/>
        <end position="349"/>
    </location>
</feature>
<feature type="transmembrane region" description="Helical" evidence="3">
    <location>
        <begin position="350"/>
        <end position="370"/>
    </location>
</feature>
<feature type="topological domain" description="Cytoplasmic" evidence="3">
    <location>
        <begin position="371"/>
        <end position="384"/>
    </location>
</feature>
<feature type="transmembrane region" description="Helical" evidence="3">
    <location>
        <begin position="385"/>
        <end position="405"/>
    </location>
</feature>
<feature type="topological domain" description="Extracellular" evidence="3">
    <location>
        <begin position="406"/>
        <end position="418"/>
    </location>
</feature>
<feature type="transmembrane region" description="Helical" evidence="3">
    <location>
        <begin position="419"/>
        <end position="439"/>
    </location>
</feature>
<feature type="topological domain" description="Cytoplasmic" evidence="3">
    <location>
        <begin position="440"/>
        <end position="464"/>
    </location>
</feature>
<feature type="glycosylation site" description="N-linked (GlcNAc...) asparagine" evidence="3">
    <location>
        <position position="39"/>
    </location>
</feature>
<feature type="glycosylation site" description="N-linked (GlcNAc...) asparagine" evidence="3">
    <location>
        <position position="47"/>
    </location>
</feature>
<feature type="glycosylation site" description="N-linked (GlcNAc...) asparagine" evidence="3">
    <location>
        <position position="54"/>
    </location>
</feature>
<gene>
    <name type="primary">SLC46A3</name>
    <name type="ORF">RCJMB04_1c21</name>
</gene>
<dbReference type="EMBL" id="AJ851382">
    <property type="protein sequence ID" value="CAH65016.1"/>
    <property type="molecule type" value="mRNA"/>
</dbReference>
<dbReference type="RefSeq" id="NP_001025999.1">
    <property type="nucleotide sequence ID" value="NM_001030828.1"/>
</dbReference>
<dbReference type="RefSeq" id="XP_046764260.1">
    <property type="nucleotide sequence ID" value="XM_046908304.1"/>
</dbReference>
<dbReference type="SMR" id="Q5F4B8"/>
<dbReference type="FunCoup" id="Q5F4B8">
    <property type="interactions" value="166"/>
</dbReference>
<dbReference type="GlyCosmos" id="Q5F4B8">
    <property type="glycosylation" value="3 sites, No reported glycans"/>
</dbReference>
<dbReference type="GlyGen" id="Q5F4B8">
    <property type="glycosylation" value="3 sites"/>
</dbReference>
<dbReference type="PaxDb" id="9031-ENSGALP00000027554"/>
<dbReference type="GeneID" id="418924"/>
<dbReference type="KEGG" id="gga:418924"/>
<dbReference type="CTD" id="283537"/>
<dbReference type="VEuPathDB" id="HostDB:geneid_418924"/>
<dbReference type="eggNOG" id="KOG2816">
    <property type="taxonomic scope" value="Eukaryota"/>
</dbReference>
<dbReference type="InParanoid" id="Q5F4B8"/>
<dbReference type="OrthoDB" id="3026777at2759"/>
<dbReference type="PhylomeDB" id="Q5F4B8"/>
<dbReference type="PRO" id="PR:Q5F4B8"/>
<dbReference type="Proteomes" id="UP000000539">
    <property type="component" value="Unassembled WGS sequence"/>
</dbReference>
<dbReference type="GO" id="GO:0005765">
    <property type="term" value="C:lysosomal membrane"/>
    <property type="evidence" value="ECO:0000318"/>
    <property type="project" value="GO_Central"/>
</dbReference>
<dbReference type="GO" id="GO:0015293">
    <property type="term" value="F:symporter activity"/>
    <property type="evidence" value="ECO:0007669"/>
    <property type="project" value="UniProtKB-KW"/>
</dbReference>
<dbReference type="GO" id="GO:0022857">
    <property type="term" value="F:transmembrane transporter activity"/>
    <property type="evidence" value="ECO:0000318"/>
    <property type="project" value="GO_Central"/>
</dbReference>
<dbReference type="GO" id="GO:0034486">
    <property type="term" value="P:vacuolar transmembrane transport"/>
    <property type="evidence" value="ECO:0000318"/>
    <property type="project" value="GO_Central"/>
</dbReference>
<dbReference type="CDD" id="cd17448">
    <property type="entry name" value="MFS_SLC46A3"/>
    <property type="match status" value="1"/>
</dbReference>
<dbReference type="Gene3D" id="1.20.1250.20">
    <property type="entry name" value="MFS general substrate transporter like domains"/>
    <property type="match status" value="1"/>
</dbReference>
<dbReference type="InterPro" id="IPR011701">
    <property type="entry name" value="MFS"/>
</dbReference>
<dbReference type="InterPro" id="IPR036259">
    <property type="entry name" value="MFS_trans_sf"/>
</dbReference>
<dbReference type="PANTHER" id="PTHR23507:SF9">
    <property type="entry name" value="LYSOSOMAL PROTON-COUPLED STEROID CONJUGATE AND BILE ACID SYMPORTER SLC46A3"/>
    <property type="match status" value="1"/>
</dbReference>
<dbReference type="PANTHER" id="PTHR23507">
    <property type="entry name" value="ZGC:174356"/>
    <property type="match status" value="1"/>
</dbReference>
<dbReference type="Pfam" id="PF07690">
    <property type="entry name" value="MFS_1"/>
    <property type="match status" value="1"/>
</dbReference>
<dbReference type="SUPFAM" id="SSF103473">
    <property type="entry name" value="MFS general substrate transporter"/>
    <property type="match status" value="1"/>
</dbReference>
<organism>
    <name type="scientific">Gallus gallus</name>
    <name type="common">Chicken</name>
    <dbReference type="NCBI Taxonomy" id="9031"/>
    <lineage>
        <taxon>Eukaryota</taxon>
        <taxon>Metazoa</taxon>
        <taxon>Chordata</taxon>
        <taxon>Craniata</taxon>
        <taxon>Vertebrata</taxon>
        <taxon>Euteleostomi</taxon>
        <taxon>Archelosauria</taxon>
        <taxon>Archosauria</taxon>
        <taxon>Dinosauria</taxon>
        <taxon>Saurischia</taxon>
        <taxon>Theropoda</taxon>
        <taxon>Coelurosauria</taxon>
        <taxon>Aves</taxon>
        <taxon>Neognathae</taxon>
        <taxon>Galloanserae</taxon>
        <taxon>Galliformes</taxon>
        <taxon>Phasianidae</taxon>
        <taxon>Phasianinae</taxon>
        <taxon>Gallus</taxon>
    </lineage>
</organism>
<proteinExistence type="evidence at transcript level"/>
<keyword id="KW-0325">Glycoprotein</keyword>
<keyword id="KW-0458">Lysosome</keyword>
<keyword id="KW-0472">Membrane</keyword>
<keyword id="KW-1185">Reference proteome</keyword>
<keyword id="KW-0732">Signal</keyword>
<keyword id="KW-0769">Symport</keyword>
<keyword id="KW-0812">Transmembrane</keyword>
<keyword id="KW-1133">Transmembrane helix</keyword>
<keyword id="KW-0813">Transport</keyword>
<reference key="1">
    <citation type="journal article" date="2005" name="Genome Biol.">
        <title>Full-length cDNAs from chicken bursal lymphocytes to facilitate gene function analysis.</title>
        <authorList>
            <person name="Caldwell R.B."/>
            <person name="Kierzek A.M."/>
            <person name="Arakawa H."/>
            <person name="Bezzubov Y."/>
            <person name="Zaim J."/>
            <person name="Fiedler P."/>
            <person name="Kutter S."/>
            <person name="Blagodatski A."/>
            <person name="Kostovska D."/>
            <person name="Koter M."/>
            <person name="Plachy J."/>
            <person name="Carninci P."/>
            <person name="Hayashizaki Y."/>
            <person name="Buerstedde J.-M."/>
        </authorList>
    </citation>
    <scope>NUCLEOTIDE SEQUENCE [LARGE SCALE MRNA]</scope>
    <source>
        <strain>CB</strain>
        <tissue>Bursa of Fabricius</tissue>
    </source>
</reference>
<evidence type="ECO:0000250" key="1">
    <source>
        <dbReference type="UniProtKB" id="Q7Z3Q1"/>
    </source>
</evidence>
<evidence type="ECO:0000250" key="2">
    <source>
        <dbReference type="UniProtKB" id="Q9DC26"/>
    </source>
</evidence>
<evidence type="ECO:0000255" key="3"/>
<evidence type="ECO:0000305" key="4"/>
<accession>Q5F4B8</accession>
<protein>
    <recommendedName>
        <fullName>Lysosomal proton-coupled steroid conjugate and bile acid symporter SLC46A3</fullName>
    </recommendedName>
    <alternativeName>
        <fullName>Solute carrier family 46 member 3</fullName>
    </alternativeName>
</protein>
<comment type="function">
    <text evidence="1 2">Lysosomal proton-coupled steroid conjugate and bile acid transporter. Preferentially recognizes lipophilic steroid conjugates or bile acis as endogenous substrates and seems to mediate escape from lysosomes to the cytoplasm (By similarity). Modulates hepatic cytosolic copper homeostasis, maybe acting as a lysosomal copper transporter and sequestering copper ions in the lysosome (By similarity).</text>
</comment>
<comment type="catalytic activity">
    <reaction evidence="1">
        <text>estrone 3-sulfate(out) + n H(+)(out) = estrone 3-sulfate(in) + n H(+)(in)</text>
        <dbReference type="Rhea" id="RHEA:75483"/>
        <dbReference type="ChEBI" id="CHEBI:15378"/>
        <dbReference type="ChEBI" id="CHEBI:60050"/>
    </reaction>
</comment>
<comment type="catalytic activity">
    <reaction evidence="1">
        <text>25-hydroxyvitamin D3 sulfate(out) + n H(+)(out) = 25-hydroxyvitamin D3 sulfate(in) + n H(+)(in)</text>
        <dbReference type="Rhea" id="RHEA:75491"/>
        <dbReference type="ChEBI" id="CHEBI:15378"/>
        <dbReference type="ChEBI" id="CHEBI:194336"/>
    </reaction>
</comment>
<comment type="catalytic activity">
    <reaction evidence="1">
        <text>cholate(out) + n H(+)(out) = cholate(in) + n H(+)(in)</text>
        <dbReference type="Rhea" id="RHEA:75499"/>
        <dbReference type="ChEBI" id="CHEBI:15378"/>
        <dbReference type="ChEBI" id="CHEBI:29747"/>
    </reaction>
</comment>
<comment type="catalytic activity">
    <reaction evidence="1">
        <text>glycocholate(out) + n H(+)(out) = glycocholate(in) + n H(+)(in)</text>
        <dbReference type="Rhea" id="RHEA:75503"/>
        <dbReference type="ChEBI" id="CHEBI:15378"/>
        <dbReference type="ChEBI" id="CHEBI:29746"/>
    </reaction>
</comment>
<comment type="catalytic activity">
    <reaction evidence="1">
        <text>taurocholate(out) + n H(+)(out) = taurocholate(in) + n H(+)(in)</text>
        <dbReference type="Rhea" id="RHEA:75507"/>
        <dbReference type="ChEBI" id="CHEBI:15378"/>
        <dbReference type="ChEBI" id="CHEBI:36257"/>
    </reaction>
</comment>
<comment type="catalytic activity">
    <reaction evidence="1">
        <text>dehydroepiandrosterone 3-sulfate(out) + n H(+)(out) = dehydroepiandrosterone 3-sulfate(in) + n H(+)(in)</text>
        <dbReference type="Rhea" id="RHEA:75487"/>
        <dbReference type="ChEBI" id="CHEBI:15378"/>
        <dbReference type="ChEBI" id="CHEBI:57905"/>
    </reaction>
</comment>
<comment type="subcellular location">
    <subcellularLocation>
        <location evidence="1">Lysosome membrane</location>
        <topology evidence="3">Multi-pass membrane protein</topology>
    </subcellularLocation>
</comment>
<comment type="similarity">
    <text evidence="4">Belongs to the major facilitator superfamily. SLC46A family.</text>
</comment>
<sequence length="464" mass="51398">MRKVLLVEPVIFIYIFASSLTSPVVQQFIYRKLWEEEYNSTAISSDNSSHCERNKSSPTYVMEKAIQEKTSFFNMQLDLTGAVPSLIVAFIIVANGDHQGRKKSLVLPSIGALIADIFLTIVSYFSWPTSVLFLATFISGLFGSMATFLGGGFAYIADQCHDEKQKTTRIAVIDLIFGVVSGLAGLSSGYFLREMGFTWTFATASLLHVVNIIYITFFLQDTVHISEFQQQAPLSYKEHLKETFSGVYMLFKTAPSKKRILIIVLLFIFMTYLFTMFGGSSLFTLYELDEPLCWTEVYIGYGAAAFTSISLTSFLGVYLFSKCLKDIYIVFIGIFSYIGGIVMAAFAKTTLLMFLVRVPSLFSIMPIPVLRSMLSKVVLPSEQGAVFACIACLEVLTGTISLSVFNVIYAATVAWFSGFSFLLSASLCLIPLGVLCWLLCTSWNGEDLALLVPEEVSSIDSVDS</sequence>